<organismHost>
    <name type="scientific">Homo sapiens</name>
    <name type="common">Human</name>
    <dbReference type="NCBI Taxonomy" id="9606"/>
</organismHost>
<accession>P13842</accession>
<accession>Q2MH35</accession>
<accession>Q2MH36</accession>
<accession>Q2MH37</accession>
<organism>
    <name type="scientific">Rotavirus A (strain RVA/Human/Japan/KU/1995/G1P1A[8])</name>
    <name type="common">RV-A</name>
    <dbReference type="NCBI Taxonomy" id="10952"/>
    <lineage>
        <taxon>Viruses</taxon>
        <taxon>Riboviria</taxon>
        <taxon>Orthornavirae</taxon>
        <taxon>Duplornaviricota</taxon>
        <taxon>Resentoviricetes</taxon>
        <taxon>Reovirales</taxon>
        <taxon>Sedoreoviridae</taxon>
        <taxon>Rotavirus</taxon>
        <taxon>Rotavirus A</taxon>
    </lineage>
</organism>
<sequence>MASLIYRQLLTNSYSVDLHDEIEQIGSEKTQNVTVNPGPFAQTRYAPVNWGHGEINDSTTVEPILDGPYQPTTFKPLTDYWILINSNTNGVVYESTNNSDFWTAVVAVEPHVNPVDRQYTVFGENKQFNVRNDSDKWKFLEMFRGSSQNEFYNRRTLTSDTKLVGILKYGGRIWTFHGETPRATTDSSNTANLNDISIIIHSEFYIIPRSQESKCNEYINNGLPPIQNTRNVVPLSLSSRSIQYKRAQVNEDITISKTSLWKEMQCNRDIIIRFKFGNSIVKLGGLGYKWSEISYKAANYQYNYLRDGEQVTAHTTCSVNGVNNFSYNGGSLPTDFSVSRYEVIKENSYVYVDYWDDSKAFRNMVYVRSLAANLNSVKCTGGSYNFSIPVGAWPVMNGGAVSLHFAGVTLSTQFTDFVSLNSLRFRFSLTVDEPSFSILRTRTVNLYGLPAANPNNGNEYYEISGRFSLISLVPTNDDYQTPIMNSVTVRQDLERQLTDLREEFNSLSQEIAMSQLIDLALLPLDMFSMFSGIKSTIDLTKSMATSVMKKFRKSKLATSISEMTNSLSDAASSASRSVSIRSNISTISNWTNVSNDVSNVTNSLSDISTQTSTISKNLRLKEMITQTEGMSFDDISAAVLKTKIDMSTQIGKNTLPDIVTEASEKFIPKRSYRILKDDEVMEINTEGKVFAYKIDTLNEVPFDVNKFAELVTNSPVISAIIDFKTLKNLNDNYGITRIEALNLIKSNPNVLRNFINQNNPIIRNRIEQLILQCKL</sequence>
<protein>
    <recommendedName>
        <fullName evidence="1">Outer capsid protein VP4</fullName>
    </recommendedName>
    <alternativeName>
        <fullName evidence="1">Hemagglutinin</fullName>
    </alternativeName>
    <component>
        <recommendedName>
            <fullName evidence="1">Outer capsid protein VP8*</fullName>
        </recommendedName>
    </component>
    <component>
        <recommendedName>
            <fullName evidence="1">Outer capsid protein VP5*</fullName>
        </recommendedName>
    </component>
</protein>
<proteinExistence type="inferred from homology"/>
<name>VP4_ROTHK</name>
<evidence type="ECO:0000255" key="1">
    <source>
        <dbReference type="HAMAP-Rule" id="MF_04132"/>
    </source>
</evidence>
<evidence type="ECO:0000269" key="2">
    <source>
    </source>
</evidence>
<evidence type="ECO:0000303" key="3">
    <source>
    </source>
</evidence>
<evidence type="ECO:0000305" key="4"/>
<dbReference type="EMBL" id="M21014">
    <property type="protein sequence ID" value="AAA47334.1"/>
    <property type="molecule type" value="Genomic_RNA"/>
</dbReference>
<dbReference type="EMBL" id="AB222784">
    <property type="protein sequence ID" value="BAE76023.1"/>
    <property type="molecule type" value="Genomic_RNA"/>
</dbReference>
<dbReference type="EMBL" id="AB222785">
    <property type="protein sequence ID" value="BAE76024.1"/>
    <property type="molecule type" value="Genomic_RNA"/>
</dbReference>
<dbReference type="EMBL" id="AB222786">
    <property type="protein sequence ID" value="BAE76025.1"/>
    <property type="molecule type" value="Genomic_RNA"/>
</dbReference>
<dbReference type="PIR" id="A28844">
    <property type="entry name" value="VPXRHK"/>
</dbReference>
<dbReference type="SMR" id="P13842"/>
<dbReference type="Proteomes" id="UP000001458">
    <property type="component" value="Genome"/>
</dbReference>
<dbReference type="GO" id="GO:0044172">
    <property type="term" value="C:host cell endoplasmic reticulum-Golgi intermediate compartment"/>
    <property type="evidence" value="ECO:0007669"/>
    <property type="project" value="UniProtKB-SubCell"/>
</dbReference>
<dbReference type="GO" id="GO:0020002">
    <property type="term" value="C:host cell plasma membrane"/>
    <property type="evidence" value="ECO:0007669"/>
    <property type="project" value="UniProtKB-SubCell"/>
</dbReference>
<dbReference type="GO" id="GO:0044168">
    <property type="term" value="C:host cell rough endoplasmic reticulum"/>
    <property type="evidence" value="ECO:0007669"/>
    <property type="project" value="UniProtKB-SubCell"/>
</dbReference>
<dbReference type="GO" id="GO:0044163">
    <property type="term" value="C:host cytoskeleton"/>
    <property type="evidence" value="ECO:0007669"/>
    <property type="project" value="UniProtKB-SubCell"/>
</dbReference>
<dbReference type="GO" id="GO:0016020">
    <property type="term" value="C:membrane"/>
    <property type="evidence" value="ECO:0007669"/>
    <property type="project" value="UniProtKB-KW"/>
</dbReference>
<dbReference type="GO" id="GO:0039624">
    <property type="term" value="C:viral outer capsid"/>
    <property type="evidence" value="ECO:0007669"/>
    <property type="project" value="UniProtKB-UniRule"/>
</dbReference>
<dbReference type="GO" id="GO:0039665">
    <property type="term" value="P:permeabilization of host organelle membrane involved in viral entry into host cell"/>
    <property type="evidence" value="ECO:0007669"/>
    <property type="project" value="UniProtKB-UniRule"/>
</dbReference>
<dbReference type="GO" id="GO:0019062">
    <property type="term" value="P:virion attachment to host cell"/>
    <property type="evidence" value="ECO:0007669"/>
    <property type="project" value="UniProtKB-UniRule"/>
</dbReference>
<dbReference type="FunFam" id="2.60.120.200:FF:000303">
    <property type="entry name" value="Outer capsid protein VP4"/>
    <property type="match status" value="1"/>
</dbReference>
<dbReference type="Gene3D" id="1.20.5.170">
    <property type="match status" value="1"/>
</dbReference>
<dbReference type="Gene3D" id="2.60.120.200">
    <property type="match status" value="1"/>
</dbReference>
<dbReference type="HAMAP" id="MF_04132">
    <property type="entry name" value="Rota_A_VP4"/>
    <property type="match status" value="1"/>
</dbReference>
<dbReference type="HAMAP" id="MF_04125">
    <property type="entry name" value="Rota_VP4"/>
    <property type="match status" value="1"/>
</dbReference>
<dbReference type="InterPro" id="IPR013320">
    <property type="entry name" value="ConA-like_dom_sf"/>
</dbReference>
<dbReference type="InterPro" id="IPR042546">
    <property type="entry name" value="Rota_A_VP4"/>
</dbReference>
<dbReference type="InterPro" id="IPR035330">
    <property type="entry name" value="Rota_VP4_MID"/>
</dbReference>
<dbReference type="InterPro" id="IPR038017">
    <property type="entry name" value="Rota_VP4_MID_sf"/>
</dbReference>
<dbReference type="InterPro" id="IPR000416">
    <property type="entry name" value="VP4_concanavalin-like"/>
</dbReference>
<dbReference type="InterPro" id="IPR035329">
    <property type="entry name" value="VP4_helical"/>
</dbReference>
<dbReference type="Pfam" id="PF17477">
    <property type="entry name" value="Rota_VP4_MID"/>
    <property type="match status" value="1"/>
</dbReference>
<dbReference type="Pfam" id="PF00426">
    <property type="entry name" value="VP4_haemagglut"/>
    <property type="match status" value="1"/>
</dbReference>
<dbReference type="Pfam" id="PF17478">
    <property type="entry name" value="VP4_helical"/>
    <property type="match status" value="1"/>
</dbReference>
<dbReference type="SUPFAM" id="SSF49899">
    <property type="entry name" value="Concanavalin A-like lectins/glucanases"/>
    <property type="match status" value="1"/>
</dbReference>
<dbReference type="SUPFAM" id="SSF111379">
    <property type="entry name" value="VP4 membrane interaction domain"/>
    <property type="match status" value="1"/>
</dbReference>
<keyword id="KW-0167">Capsid protein</keyword>
<keyword id="KW-0175">Coiled coil</keyword>
<keyword id="KW-1015">Disulfide bond</keyword>
<keyword id="KW-0348">Hemagglutinin</keyword>
<keyword id="KW-1032">Host cell membrane</keyword>
<keyword id="KW-1035">Host cytoplasm</keyword>
<keyword id="KW-1037">Host cytoskeleton</keyword>
<keyword id="KW-1038">Host endoplasmic reticulum</keyword>
<keyword id="KW-1043">Host membrane</keyword>
<keyword id="KW-0945">Host-virus interaction</keyword>
<keyword id="KW-0472">Membrane</keyword>
<keyword id="KW-1152">Outer capsid protein</keyword>
<keyword id="KW-1161">Viral attachment to host cell</keyword>
<keyword id="KW-1162">Viral penetration into host cytoplasm</keyword>
<keyword id="KW-1173">Viral penetration via permeabilization of host membrane</keyword>
<keyword id="KW-0946">Virion</keyword>
<keyword id="KW-1160">Virus entry into host cell</keyword>
<comment type="function">
    <molecule>Outer capsid protein VP4</molecule>
    <text evidence="1">Spike-forming protein that mediates virion attachment to the host epithelial cell receptors and plays a major role in cell penetration, determination of host range restriction and virulence. Rotavirus attachment and entry into the host cell probably involves multiple sequential contacts between the outer capsid proteins VP4 and VP7, and the cell receptors. It is subsequently lost, together with VP7, following virus entry into the host cell. Following entry into the host cell, low intracellular or intravesicular Ca(2+) concentration probably causes the calcium-stabilized VP7 trimers to dissociate from the virion. This step is probably necessary for the membrane-disrupting entry step and the release of VP4, which is locked onto the virion by VP7. During the virus exit from the host cell, VP4 seems to be required to target the newly formed virions to the host cell lipid rafts.</text>
</comment>
<comment type="function">
    <molecule>Outer capsid protein VP5*</molecule>
    <text evidence="1">Forms the spike 'foot' and 'body' and acts as a membrane permeabilization protein that mediates release of viral particles from endosomal compartments into the cytoplasm. During entry, the part of VP5* that protrudes from the virus folds back on itself and reorganizes from a local dimer to a trimer. This reorganization may be linked to membrane penetration by exposing VP5* hydrophobic region. In integrin-dependent strains, VP5* targets the integrin heterodimer ITGA2/ITGB1 for cell attachment.</text>
</comment>
<comment type="function">
    <molecule>Outer capsid protein VP8*</molecule>
    <text evidence="1">Forms the head of the spikes and mediates the recognition of specific host cell surface glycans. It is the viral hemagglutinin and an important target of neutralizing antibodies. In sialic acid-dependent strains, VP8* binds to host cell sialic acid, most probably a ganglioside, providing the initial contact. In some other strains, VP8* mediates the attachment to histo-blood group antigens (HBGAs) for viral entry.</text>
</comment>
<comment type="subunit">
    <molecule>Outer capsid protein VP4</molecule>
    <text evidence="1">Homotrimer. VP4 adopts a dimeric appearance above the capsid surface, while forming a trimeric base anchored inside the capsid layer. Only hints of the third molecule are observed above the capsid surface. It probably performs a series of molecular rearrangements during viral entry. Prior to trypsin cleavage, it is flexible. The priming trypsin cleavage triggers its rearrangement into rigid spikes with approximate two-fold symmetry of their protruding parts. After an unknown second triggering event, cleaved VP4 may undergo another rearrangement, in which two VP5* subunits fold back on themselves and join a third subunit to form a tightly associated trimer, shaped like a folded umbrella. Interacts with VP6. Interacts with VP7.</text>
</comment>
<comment type="subunit">
    <molecule>Outer capsid protein VP5*</molecule>
    <text evidence="1">Homotrimer. The trimer is coiled-coil stabilized by its C-terminus, however, its N-terminus, known as antigen domain or 'body', seems to be flexible allowing it to self-associate either as a dimer or a trimer.</text>
</comment>
<comment type="subcellular location">
    <molecule>Outer capsid protein VP4</molecule>
    <subcellularLocation>
        <location evidence="1">Virion</location>
    </subcellularLocation>
    <subcellularLocation>
        <location evidence="1">Host rough endoplasmic reticulum</location>
    </subcellularLocation>
    <subcellularLocation>
        <location evidence="1">Host cell membrane</location>
    </subcellularLocation>
    <subcellularLocation>
        <location evidence="1">Host cytoplasm</location>
        <location evidence="1">Host cytoskeleton</location>
    </subcellularLocation>
    <subcellularLocation>
        <location evidence="1">Host endoplasmic reticulum-Golgi intermediate compartment</location>
    </subcellularLocation>
    <text evidence="1">The outer layer contains 180 copies of VP4, grouped as 60 dimers. Immature double-layered particles assembled in the cytoplasm bud across the membrane of the endoplasmic reticulum, acquiring during this process a transient lipid membrane that is modified with the ER resident viral glycoproteins NSP4 and VP7; these enveloped particles also contain VP4. As the particles move towards the interior of the ER cisternae, the transient lipid membrane and the non-structural protein NSP4 are lost, while the virus surface proteins VP4 and VP7 rearrange to form the outermost virus protein layer, yielding mature infectious triple-layered particles. VP4 also seems to associate with lipid rafts of the host cell membrane probably for the exit of the virus from the infected cell by an alternate pathway.</text>
</comment>
<comment type="subcellular location">
    <molecule>Outer capsid protein VP8*</molecule>
    <subcellularLocation>
        <location evidence="1">Virion</location>
    </subcellularLocation>
    <text evidence="1">Outer capsid protein.</text>
</comment>
<comment type="subcellular location">
    <molecule>Outer capsid protein VP5*</molecule>
    <subcellularLocation>
        <location evidence="1">Virion</location>
    </subcellularLocation>
    <text evidence="1">Outer capsid protein.</text>
</comment>
<comment type="domain">
    <molecule>Outer capsid protein VP4</molecule>
    <text evidence="1">The VP4 spike is divided into a foot, a stalk and body, and a head.</text>
</comment>
<comment type="PTM">
    <molecule>Outer capsid protein VP4</molecule>
    <text evidence="1">Proteolytic cleavage by trypsin results in activation of VP4 functions and greatly increases infectivity. The penetration into the host cell is dependent on trypsin treatment of VP4. It produces two peptides, VP5* and VP8* that remain associated with the virion. Cleavage of VP4 by trypsin probably occurs in vivo in the lumen of the intestine prior to infection of enterocytes. Trypsin seems to be incorporated into the three-layered viral particles but remains inactive as long as the viral outer capsid is intact and would only be activated upon the solubilization of the latter.</text>
</comment>
<comment type="miscellaneous">
    <text evidence="2 3">This strain probably does not use sialic acid to attach to the host cell.</text>
</comment>
<comment type="miscellaneous">
    <text evidence="1">In group A rotaviruses, VP4 defines the P serotype.</text>
</comment>
<comment type="miscellaneous">
    <text evidence="1">Some rotavirus strains are neuraminidase-sensitive and require sialic acid to attach to the cell surface. Some rotavirus strains are integrin-dependent. Some rotavirus strains depend on ganglioside for their entry into the host cell. Hsp70 also seems to be involved in the entry of some strains.</text>
</comment>
<comment type="similarity">
    <text evidence="1">Belongs to the rotavirus VP4 family.</text>
</comment>
<feature type="chain" id="PRO_0000041060" description="Outer capsid protein VP4" evidence="1">
    <location>
        <begin position="1"/>
        <end position="775"/>
    </location>
</feature>
<feature type="chain" id="PRO_0000041061" description="Outer capsid protein VP8*" evidence="1">
    <location>
        <begin position="1"/>
        <end position="230"/>
    </location>
</feature>
<feature type="chain" id="PRO_0000041062" description="Outer capsid protein VP5*" evidence="1">
    <location>
        <begin position="247"/>
        <end position="775"/>
    </location>
</feature>
<feature type="region of interest" description="Spike head" evidence="1">
    <location>
        <begin position="65"/>
        <end position="223"/>
    </location>
</feature>
<feature type="region of interest" description="Spike body and stalk (antigen domain)" evidence="1">
    <location>
        <begin position="247"/>
        <end position="478"/>
    </location>
</feature>
<feature type="region of interest" description="Hydrophobic; possible role in virus entry into host cell" evidence="1">
    <location>
        <begin position="388"/>
        <end position="408"/>
    </location>
</feature>
<feature type="region of interest" description="Spike foot" evidence="1">
    <location>
        <begin position="509"/>
        <end position="775"/>
    </location>
</feature>
<feature type="coiled-coil region" evidence="1">
    <location>
        <begin position="483"/>
        <end position="510"/>
    </location>
</feature>
<feature type="short sequence motif" description="DGE motif; interaction with ITGA2/ITGB1 heterodimer" evidence="1">
    <location>
        <begin position="307"/>
        <end position="309"/>
    </location>
</feature>
<feature type="short sequence motif" description="YGL motif; interaction with ITGA4" evidence="1">
    <location>
        <begin position="447"/>
        <end position="449"/>
    </location>
</feature>
<feature type="short sequence motif" description="KID motif; interaction with HSPA8" evidence="1">
    <location>
        <begin position="643"/>
        <end position="645"/>
    </location>
</feature>
<feature type="site" description="Cleavage" evidence="1">
    <location>
        <begin position="230"/>
        <end position="231"/>
    </location>
</feature>
<feature type="site" description="Cleavage" evidence="1">
    <location>
        <begin position="240"/>
        <end position="241"/>
    </location>
</feature>
<feature type="site" description="Cleavage; associated with enhancement of infectivity" evidence="1">
    <location>
        <begin position="246"/>
        <end position="247"/>
    </location>
</feature>
<feature type="disulfide bond" evidence="1">
    <location>
        <begin position="317"/>
        <end position="379"/>
    </location>
</feature>
<feature type="sequence conflict" description="In Ref. 1." evidence="4" ref="1">
    <original>V</original>
    <variation>I</variation>
    <location>
        <position position="108"/>
    </location>
</feature>
<feature type="sequence conflict" description="In Ref. 1." evidence="4" ref="1">
    <original>NP</original>
    <variation>IQ</variation>
    <location>
        <begin position="113"/>
        <end position="114"/>
    </location>
</feature>
<feature type="sequence conflict" description="In Ref. 2; BAE76024." evidence="4" ref="2">
    <original>G</original>
    <variation>D</variation>
    <location>
        <position position="170"/>
    </location>
</feature>
<feature type="sequence conflict" description="In Ref. 2; BAE76025." evidence="4" ref="2">
    <original>E</original>
    <variation>K</variation>
    <location>
        <position position="203"/>
    </location>
</feature>
<feature type="sequence conflict" description="In Ref. 1." evidence="4" ref="1">
    <original>N</original>
    <variation>D</variation>
    <location>
        <position position="385"/>
    </location>
</feature>
<feature type="sequence conflict" description="In Ref. 1." evidence="4" ref="1">
    <original>GI</original>
    <variation>EL</variation>
    <location>
        <begin position="532"/>
        <end position="533"/>
    </location>
</feature>
<feature type="sequence conflict" description="In Ref. 1." evidence="4" ref="1">
    <original>N</original>
    <variation>H</variation>
    <location>
        <position position="565"/>
    </location>
</feature>
<reference key="1">
    <citation type="journal article" date="1988" name="J. Virol.">
        <title>Identification of cross-reactive and serotype 2-specific neutralization epitopes on VP3 of human rotavirus.</title>
        <authorList>
            <person name="Taniguchi K."/>
            <person name="Maloy W.L."/>
            <person name="Nishikawa K."/>
            <person name="Green K.Y."/>
            <person name="Hoshino Y."/>
            <person name="Urasawa S."/>
            <person name="Kapikian A.Z."/>
            <person name="Chanock R.M."/>
            <person name="Gorziglia M."/>
        </authorList>
    </citation>
    <scope>NUCLEOTIDE SEQUENCE [GENOMIC RNA]</scope>
</reference>
<reference key="2">
    <citation type="journal article" date="2006" name="J. Virol.">
        <title>High-resolution molecular and antigen structure of the VP8* core of a sialic acid-independent human rotavirus strain.</title>
        <authorList>
            <person name="Monnier N."/>
            <person name="Higo-Moriguchi K."/>
            <person name="Sun Z.Y."/>
            <person name="Prasad B.V.V."/>
            <person name="Taniguchi K."/>
            <person name="Dormitzer P.R."/>
        </authorList>
    </citation>
    <scope>NUCLEOTIDE SEQUENCE [GENOMIC RNA]</scope>
</reference>
<reference key="3">
    <citation type="journal article" date="2002" name="J. Virol.">
        <title>Initial interaction of rotavirus strains with N-acetylneuraminic (sialic) acid residues on the cell surface correlates with VP4 genotype, not species of origin.</title>
        <authorList>
            <person name="Ciarlet M."/>
            <person name="Ludert J.E."/>
            <person name="Iturriza-Gomara M."/>
            <person name="Liprandi F."/>
            <person name="Gray J.J."/>
            <person name="Desselberger U."/>
            <person name="Estes M.K."/>
        </authorList>
    </citation>
    <scope>SIALIC ACID INDEPENDENCY</scope>
</reference>
<reference key="4">
    <citation type="journal article" date="2006" name="Glycoconj. J.">
        <title>Role of sialic acids in rotavirus infection.</title>
        <authorList>
            <person name="Isa P."/>
            <person name="Arias C.F."/>
            <person name="Lopez S."/>
        </authorList>
    </citation>
    <scope>REVIEW</scope>
</reference>